<reference key="1">
    <citation type="journal article" date="2007" name="Science">
        <title>The Fusarium graminearum genome reveals a link between localized polymorphism and pathogen specialization.</title>
        <authorList>
            <person name="Cuomo C.A."/>
            <person name="Gueldener U."/>
            <person name="Xu J.-R."/>
            <person name="Trail F."/>
            <person name="Turgeon B.G."/>
            <person name="Di Pietro A."/>
            <person name="Walton J.D."/>
            <person name="Ma L.-J."/>
            <person name="Baker S.E."/>
            <person name="Rep M."/>
            <person name="Adam G."/>
            <person name="Antoniw J."/>
            <person name="Baldwin T."/>
            <person name="Calvo S.E."/>
            <person name="Chang Y.-L."/>
            <person name="DeCaprio D."/>
            <person name="Gale L.R."/>
            <person name="Gnerre S."/>
            <person name="Goswami R.S."/>
            <person name="Hammond-Kosack K."/>
            <person name="Harris L.J."/>
            <person name="Hilburn K."/>
            <person name="Kennell J.C."/>
            <person name="Kroken S."/>
            <person name="Magnuson J.K."/>
            <person name="Mannhaupt G."/>
            <person name="Mauceli E.W."/>
            <person name="Mewes H.-W."/>
            <person name="Mitterbauer R."/>
            <person name="Muehlbauer G."/>
            <person name="Muensterkoetter M."/>
            <person name="Nelson D."/>
            <person name="O'Donnell K."/>
            <person name="Ouellet T."/>
            <person name="Qi W."/>
            <person name="Quesneville H."/>
            <person name="Roncero M.I.G."/>
            <person name="Seong K.-Y."/>
            <person name="Tetko I.V."/>
            <person name="Urban M."/>
            <person name="Waalwijk C."/>
            <person name="Ward T.J."/>
            <person name="Yao J."/>
            <person name="Birren B.W."/>
            <person name="Kistler H.C."/>
        </authorList>
    </citation>
    <scope>NUCLEOTIDE SEQUENCE [LARGE SCALE GENOMIC DNA]</scope>
    <source>
        <strain>ATCC MYA-4620 / CBS 123657 / FGSC 9075 / NRRL 31084 / PH-1</strain>
    </source>
</reference>
<reference key="2">
    <citation type="journal article" date="2010" name="Nature">
        <title>Comparative genomics reveals mobile pathogenicity chromosomes in Fusarium.</title>
        <authorList>
            <person name="Ma L.-J."/>
            <person name="van der Does H.C."/>
            <person name="Borkovich K.A."/>
            <person name="Coleman J.J."/>
            <person name="Daboussi M.-J."/>
            <person name="Di Pietro A."/>
            <person name="Dufresne M."/>
            <person name="Freitag M."/>
            <person name="Grabherr M."/>
            <person name="Henrissat B."/>
            <person name="Houterman P.M."/>
            <person name="Kang S."/>
            <person name="Shim W.-B."/>
            <person name="Woloshuk C."/>
            <person name="Xie X."/>
            <person name="Xu J.-R."/>
            <person name="Antoniw J."/>
            <person name="Baker S.E."/>
            <person name="Bluhm B.H."/>
            <person name="Breakspear A."/>
            <person name="Brown D.W."/>
            <person name="Butchko R.A.E."/>
            <person name="Chapman S."/>
            <person name="Coulson R."/>
            <person name="Coutinho P.M."/>
            <person name="Danchin E.G.J."/>
            <person name="Diener A."/>
            <person name="Gale L.R."/>
            <person name="Gardiner D.M."/>
            <person name="Goff S."/>
            <person name="Hammond-Kosack K.E."/>
            <person name="Hilburn K."/>
            <person name="Hua-Van A."/>
            <person name="Jonkers W."/>
            <person name="Kazan K."/>
            <person name="Kodira C.D."/>
            <person name="Koehrsen M."/>
            <person name="Kumar L."/>
            <person name="Lee Y.-H."/>
            <person name="Li L."/>
            <person name="Manners J.M."/>
            <person name="Miranda-Saavedra D."/>
            <person name="Mukherjee M."/>
            <person name="Park G."/>
            <person name="Park J."/>
            <person name="Park S.-Y."/>
            <person name="Proctor R.H."/>
            <person name="Regev A."/>
            <person name="Ruiz-Roldan M.C."/>
            <person name="Sain D."/>
            <person name="Sakthikumar S."/>
            <person name="Sykes S."/>
            <person name="Schwartz D.C."/>
            <person name="Turgeon B.G."/>
            <person name="Wapinski I."/>
            <person name="Yoder O."/>
            <person name="Young S."/>
            <person name="Zeng Q."/>
            <person name="Zhou S."/>
            <person name="Galagan J."/>
            <person name="Cuomo C.A."/>
            <person name="Kistler H.C."/>
            <person name="Rep M."/>
        </authorList>
    </citation>
    <scope>GENOME REANNOTATION</scope>
    <source>
        <strain>ATCC MYA-4620 / CBS 123657 / FGSC 9075 / NRRL 31084 / PH-1</strain>
    </source>
</reference>
<reference key="3">
    <citation type="journal article" date="2015" name="BMC Genomics">
        <title>The completed genome sequence of the pathogenic ascomycete fungus Fusarium graminearum.</title>
        <authorList>
            <person name="King R."/>
            <person name="Urban M."/>
            <person name="Hammond-Kosack M.C.U."/>
            <person name="Hassani-Pak K."/>
            <person name="Hammond-Kosack K.E."/>
        </authorList>
    </citation>
    <scope>NUCLEOTIDE SEQUENCE [LARGE SCALE GENOMIC DNA]</scope>
    <source>
        <strain>ATCC MYA-4620 / CBS 123657 / FGSC 9075 / NRRL 31084 / PH-1</strain>
    </source>
</reference>
<accession>Q4HZQ1</accession>
<accession>A0A0E0SBV1</accession>
<accession>I1RYU8</accession>
<accession>V6RW26</accession>
<comment type="function">
    <text evidence="1">NADPH-dependent reductase which is a central component of the cytosolic iron-sulfur (Fe-S) protein assembly (CIA) machinery. Transfers electrons from NADPH via its FAD and FMN prosthetic groups to the [2Fe-2S] cluster of DRE2, another key component of the CIA machinery. In turn, this reduced cluster provides electrons for assembly of cytosolic iron-sulfur cluster proteins. Positively controls H(2)O(2)-induced cell death.</text>
</comment>
<comment type="catalytic activity">
    <reaction evidence="1">
        <text>2 oxidized [2Fe-2S]-[protein] + NADPH = 2 reduced [2Fe-2S]-[protein] + NADP(+) + H(+)</text>
        <dbReference type="Rhea" id="RHEA:67716"/>
        <dbReference type="Rhea" id="RHEA-COMP:17327"/>
        <dbReference type="Rhea" id="RHEA-COMP:17328"/>
        <dbReference type="ChEBI" id="CHEBI:15378"/>
        <dbReference type="ChEBI" id="CHEBI:33737"/>
        <dbReference type="ChEBI" id="CHEBI:33738"/>
        <dbReference type="ChEBI" id="CHEBI:57783"/>
        <dbReference type="ChEBI" id="CHEBI:58349"/>
    </reaction>
    <physiologicalReaction direction="left-to-right" evidence="1">
        <dbReference type="Rhea" id="RHEA:67717"/>
    </physiologicalReaction>
</comment>
<comment type="cofactor">
    <cofactor evidence="1">
        <name>FAD</name>
        <dbReference type="ChEBI" id="CHEBI:57692"/>
    </cofactor>
</comment>
<comment type="cofactor">
    <cofactor evidence="1">
        <name>FMN</name>
        <dbReference type="ChEBI" id="CHEBI:58210"/>
    </cofactor>
</comment>
<comment type="subunit">
    <text evidence="1">Interacts with DRE2; as part of the cytosolic iron-sulfur (Fe-S) protein assembly (CIA) machinery.</text>
</comment>
<comment type="subcellular location">
    <subcellularLocation>
        <location evidence="1">Cytoplasm</location>
    </subcellularLocation>
    <subcellularLocation>
        <location evidence="1">Mitochondrion</location>
    </subcellularLocation>
    <text evidence="1">Relocalizes to mitochondria after H(2)O(2) exposure.</text>
</comment>
<comment type="similarity">
    <text evidence="1">Belongs to the NADPH-dependent diflavin oxidoreductase NDOR1 family.</text>
</comment>
<comment type="similarity">
    <text evidence="1">In the N-terminal section; belongs to the flavodoxin family.</text>
</comment>
<comment type="similarity">
    <text evidence="1">In the C-terminal section; belongs to the flavoprotein pyridine nucleotide cytochrome reductase family.</text>
</comment>
<evidence type="ECO:0000255" key="1">
    <source>
        <dbReference type="HAMAP-Rule" id="MF_03178"/>
    </source>
</evidence>
<protein>
    <recommendedName>
        <fullName evidence="1">NADPH-dependent diflavin oxidoreductase 1</fullName>
        <ecNumber evidence="1">1.18.1.-</ecNumber>
    </recommendedName>
    <alternativeName>
        <fullName evidence="1">NADPH-dependent FMN and FAD-containing oxidoreductase</fullName>
    </alternativeName>
</protein>
<organism>
    <name type="scientific">Gibberella zeae (strain ATCC MYA-4620 / CBS 123657 / FGSC 9075 / NRRL 31084 / PH-1)</name>
    <name type="common">Wheat head blight fungus</name>
    <name type="synonym">Fusarium graminearum</name>
    <dbReference type="NCBI Taxonomy" id="229533"/>
    <lineage>
        <taxon>Eukaryota</taxon>
        <taxon>Fungi</taxon>
        <taxon>Dikarya</taxon>
        <taxon>Ascomycota</taxon>
        <taxon>Pezizomycotina</taxon>
        <taxon>Sordariomycetes</taxon>
        <taxon>Hypocreomycetidae</taxon>
        <taxon>Hypocreales</taxon>
        <taxon>Nectriaceae</taxon>
        <taxon>Fusarium</taxon>
    </lineage>
</organism>
<keyword id="KW-0963">Cytoplasm</keyword>
<keyword id="KW-0274">FAD</keyword>
<keyword id="KW-0285">Flavoprotein</keyword>
<keyword id="KW-0288">FMN</keyword>
<keyword id="KW-0496">Mitochondrion</keyword>
<keyword id="KW-0521">NADP</keyword>
<keyword id="KW-0560">Oxidoreductase</keyword>
<keyword id="KW-1185">Reference proteome</keyword>
<dbReference type="EC" id="1.18.1.-" evidence="1"/>
<dbReference type="EMBL" id="DS231668">
    <property type="protein sequence ID" value="ESU16160.1"/>
    <property type="molecule type" value="Genomic_DNA"/>
</dbReference>
<dbReference type="EMBL" id="HG970335">
    <property type="protein sequence ID" value="CEF83914.1"/>
    <property type="molecule type" value="Genomic_DNA"/>
</dbReference>
<dbReference type="RefSeq" id="XP_011328156.1">
    <property type="nucleotide sequence ID" value="XM_011329854.1"/>
</dbReference>
<dbReference type="SMR" id="Q4HZQ1"/>
<dbReference type="FunCoup" id="Q4HZQ1">
    <property type="interactions" value="759"/>
</dbReference>
<dbReference type="STRING" id="229533.Q4HZQ1"/>
<dbReference type="GeneID" id="23556507"/>
<dbReference type="KEGG" id="fgr:FGSG_09557"/>
<dbReference type="VEuPathDB" id="FungiDB:FGRAMPH1_01G26801"/>
<dbReference type="eggNOG" id="KOG1159">
    <property type="taxonomic scope" value="Eukaryota"/>
</dbReference>
<dbReference type="HOGENOM" id="CLU_001570_17_6_1"/>
<dbReference type="InParanoid" id="Q4HZQ1"/>
<dbReference type="OrthoDB" id="38972at110618"/>
<dbReference type="Proteomes" id="UP000070720">
    <property type="component" value="Chromosome 4"/>
</dbReference>
<dbReference type="GO" id="GO:0005829">
    <property type="term" value="C:cytosol"/>
    <property type="evidence" value="ECO:0007669"/>
    <property type="project" value="TreeGrafter"/>
</dbReference>
<dbReference type="GO" id="GO:0005739">
    <property type="term" value="C:mitochondrion"/>
    <property type="evidence" value="ECO:0007669"/>
    <property type="project" value="UniProtKB-SubCell"/>
</dbReference>
<dbReference type="GO" id="GO:0050660">
    <property type="term" value="F:flavin adenine dinucleotide binding"/>
    <property type="evidence" value="ECO:0007669"/>
    <property type="project" value="UniProtKB-UniRule"/>
</dbReference>
<dbReference type="GO" id="GO:0010181">
    <property type="term" value="F:FMN binding"/>
    <property type="evidence" value="ECO:0007669"/>
    <property type="project" value="UniProtKB-UniRule"/>
</dbReference>
<dbReference type="GO" id="GO:0050661">
    <property type="term" value="F:NADP binding"/>
    <property type="evidence" value="ECO:0007669"/>
    <property type="project" value="UniProtKB-UniRule"/>
</dbReference>
<dbReference type="GO" id="GO:0003958">
    <property type="term" value="F:NADPH-hemoprotein reductase activity"/>
    <property type="evidence" value="ECO:0007669"/>
    <property type="project" value="InterPro"/>
</dbReference>
<dbReference type="GO" id="GO:0016226">
    <property type="term" value="P:iron-sulfur cluster assembly"/>
    <property type="evidence" value="ECO:0007669"/>
    <property type="project" value="UniProtKB-UniRule"/>
</dbReference>
<dbReference type="Gene3D" id="3.40.50.360">
    <property type="match status" value="1"/>
</dbReference>
<dbReference type="Gene3D" id="1.20.990.10">
    <property type="entry name" value="NADPH-cytochrome p450 Reductase, Chain A, domain 3"/>
    <property type="match status" value="1"/>
</dbReference>
<dbReference type="Gene3D" id="3.40.50.80">
    <property type="entry name" value="Nucleotide-binding domain of ferredoxin-NADP reductase (FNR) module"/>
    <property type="match status" value="1"/>
</dbReference>
<dbReference type="Gene3D" id="2.40.30.10">
    <property type="entry name" value="Translation factors"/>
    <property type="match status" value="1"/>
</dbReference>
<dbReference type="HAMAP" id="MF_03178">
    <property type="entry name" value="NDOR1"/>
    <property type="match status" value="1"/>
</dbReference>
<dbReference type="InterPro" id="IPR003097">
    <property type="entry name" value="CysJ-like_FAD-binding"/>
</dbReference>
<dbReference type="InterPro" id="IPR017927">
    <property type="entry name" value="FAD-bd_FR_type"/>
</dbReference>
<dbReference type="InterPro" id="IPR001094">
    <property type="entry name" value="Flavdoxin-like"/>
</dbReference>
<dbReference type="InterPro" id="IPR008254">
    <property type="entry name" value="Flavodoxin/NO_synth"/>
</dbReference>
<dbReference type="InterPro" id="IPR001709">
    <property type="entry name" value="Flavoprot_Pyr_Nucl_cyt_Rdtase"/>
</dbReference>
<dbReference type="InterPro" id="IPR029039">
    <property type="entry name" value="Flavoprotein-like_sf"/>
</dbReference>
<dbReference type="InterPro" id="IPR039261">
    <property type="entry name" value="FNR_nucleotide-bd"/>
</dbReference>
<dbReference type="InterPro" id="IPR023173">
    <property type="entry name" value="NADPH_Cyt_P450_Rdtase_alpha"/>
</dbReference>
<dbReference type="InterPro" id="IPR028879">
    <property type="entry name" value="NDOR1"/>
</dbReference>
<dbReference type="InterPro" id="IPR001433">
    <property type="entry name" value="OxRdtase_FAD/NAD-bd"/>
</dbReference>
<dbReference type="InterPro" id="IPR017938">
    <property type="entry name" value="Riboflavin_synthase-like_b-brl"/>
</dbReference>
<dbReference type="PANTHER" id="PTHR19384:SF10">
    <property type="entry name" value="NADPH-DEPENDENT DIFLAVIN OXIDOREDUCTASE 1"/>
    <property type="match status" value="1"/>
</dbReference>
<dbReference type="PANTHER" id="PTHR19384">
    <property type="entry name" value="NITRIC OXIDE SYNTHASE-RELATED"/>
    <property type="match status" value="1"/>
</dbReference>
<dbReference type="Pfam" id="PF00667">
    <property type="entry name" value="FAD_binding_1"/>
    <property type="match status" value="1"/>
</dbReference>
<dbReference type="Pfam" id="PF00258">
    <property type="entry name" value="Flavodoxin_1"/>
    <property type="match status" value="1"/>
</dbReference>
<dbReference type="Pfam" id="PF00175">
    <property type="entry name" value="NAD_binding_1"/>
    <property type="match status" value="1"/>
</dbReference>
<dbReference type="PRINTS" id="PR00369">
    <property type="entry name" value="FLAVODOXIN"/>
</dbReference>
<dbReference type="PRINTS" id="PR00371">
    <property type="entry name" value="FPNCR"/>
</dbReference>
<dbReference type="SUPFAM" id="SSF52343">
    <property type="entry name" value="Ferredoxin reductase-like, C-terminal NADP-linked domain"/>
    <property type="match status" value="1"/>
</dbReference>
<dbReference type="SUPFAM" id="SSF52218">
    <property type="entry name" value="Flavoproteins"/>
    <property type="match status" value="1"/>
</dbReference>
<dbReference type="SUPFAM" id="SSF63380">
    <property type="entry name" value="Riboflavin synthase domain-like"/>
    <property type="match status" value="1"/>
</dbReference>
<dbReference type="PROSITE" id="PS51384">
    <property type="entry name" value="FAD_FR"/>
    <property type="match status" value="1"/>
</dbReference>
<dbReference type="PROSITE" id="PS50902">
    <property type="entry name" value="FLAVODOXIN_LIKE"/>
    <property type="match status" value="1"/>
</dbReference>
<sequence length="603" mass="68787">MAVQDRSVLVLYGSETGNAQDMAEELGRICQRLHFKSRVEELDVVDLNALLQPKFVIFVISTTGQGDMPHNSLLFWKRLLRKKLPPGCLASVNYTTFGLGDSTYLKFNWAARKLNRRLDQLGAATFIDPYEADEQFPDGLDGSFVRWTGRLYNHFLEHHPAPSGLEPIPDDVILPPKWSLETTIQNSTETNGHVPPSLENIPSSTLLPIPDGWTATLVGNGRLTPEKHWQDVRLISFDVPRRDGVKLACVPGDCLTIYPKNFPQDVQRLITLMEWEDIADKPLDLSQCESLPTNLFTDSKSTLRELLLNNIDFTAIPRRSFLKNMSYFSTNPDHKERLLEFTMAEYLDEYFDYATRSRRSILEVLEEFSSVKLPAERLFDIFPLIRGRDFSIANGGVHQSHPTDENKTRIELLVALVKYRTVLRKPREGLCSRYLDNIPMNSTLTVTRKPVLSPIHGAQNAQRPLVAIATGTGLAPIRALLHERLTQPSPGPMYLFFGNRNREADYFFQQEFDALVTEGQLNVFLAFSRDQRNKIYVQDRLLEEAKRIEEVIFDNGIFCVCGGSTKMADAAKKAVFEPFSEDVKDVEERKKMLASLTWWQEIW</sequence>
<feature type="chain" id="PRO_0000167619" description="NADPH-dependent diflavin oxidoreductase 1">
    <location>
        <begin position="1"/>
        <end position="603"/>
    </location>
</feature>
<feature type="domain" description="Flavodoxin-like" evidence="1">
    <location>
        <begin position="8"/>
        <end position="152"/>
    </location>
</feature>
<feature type="domain" description="FAD-binding FR-type" evidence="1">
    <location>
        <begin position="210"/>
        <end position="457"/>
    </location>
</feature>
<feature type="binding site" evidence="1">
    <location>
        <begin position="14"/>
        <end position="19"/>
    </location>
    <ligand>
        <name>FMN</name>
        <dbReference type="ChEBI" id="CHEBI:58210"/>
    </ligand>
</feature>
<feature type="binding site" evidence="1">
    <location>
        <begin position="61"/>
        <end position="64"/>
    </location>
    <ligand>
        <name>FMN</name>
        <dbReference type="ChEBI" id="CHEBI:58210"/>
    </ligand>
</feature>
<feature type="binding site" evidence="1">
    <location>
        <begin position="99"/>
        <end position="108"/>
    </location>
    <ligand>
        <name>FMN</name>
        <dbReference type="ChEBI" id="CHEBI:58210"/>
    </ligand>
</feature>
<feature type="binding site" evidence="1">
    <location>
        <position position="134"/>
    </location>
    <ligand>
        <name>FMN</name>
        <dbReference type="ChEBI" id="CHEBI:58210"/>
    </ligand>
</feature>
<feature type="binding site" evidence="1">
    <location>
        <position position="358"/>
    </location>
    <ligand>
        <name>FAD</name>
        <dbReference type="ChEBI" id="CHEBI:57692"/>
    </ligand>
</feature>
<feature type="binding site" evidence="1">
    <location>
        <begin position="388"/>
        <end position="391"/>
    </location>
    <ligand>
        <name>FAD</name>
        <dbReference type="ChEBI" id="CHEBI:57692"/>
    </ligand>
</feature>
<feature type="binding site" evidence="1">
    <location>
        <begin position="429"/>
        <end position="432"/>
    </location>
    <ligand>
        <name>FAD</name>
        <dbReference type="ChEBI" id="CHEBI:57692"/>
    </ligand>
</feature>
<feature type="binding site" evidence="1">
    <location>
        <position position="472"/>
    </location>
    <ligand>
        <name>NADP(+)</name>
        <dbReference type="ChEBI" id="CHEBI:58349"/>
    </ligand>
</feature>
<feature type="binding site" evidence="1">
    <location>
        <begin position="528"/>
        <end position="529"/>
    </location>
    <ligand>
        <name>NADP(+)</name>
        <dbReference type="ChEBI" id="CHEBI:58349"/>
    </ligand>
</feature>
<feature type="binding site" evidence="1">
    <location>
        <begin position="534"/>
        <end position="538"/>
    </location>
    <ligand>
        <name>NADP(+)</name>
        <dbReference type="ChEBI" id="CHEBI:58349"/>
    </ligand>
</feature>
<feature type="binding site" evidence="1">
    <location>
        <position position="603"/>
    </location>
    <ligand>
        <name>FAD</name>
        <dbReference type="ChEBI" id="CHEBI:57692"/>
    </ligand>
</feature>
<gene>
    <name evidence="1" type="primary">TAH18</name>
    <name type="ORF">FGRRES_09557</name>
    <name type="ORF">FGSG_09557</name>
</gene>
<name>NDOR1_GIBZE</name>
<proteinExistence type="inferred from homology"/>